<sequence>MAVKIRLKRMGSKRNPFYRIVVADSRSPRDGRSIEQIGTYNPVVNPVEVKIDEEKALDWMSKGAKPSDTVRNLFSNEGIMKKFHEQKNSK</sequence>
<name>RS16_OCEIH</name>
<evidence type="ECO:0000255" key="1">
    <source>
        <dbReference type="HAMAP-Rule" id="MF_00385"/>
    </source>
</evidence>
<evidence type="ECO:0000305" key="2"/>
<proteinExistence type="inferred from homology"/>
<protein>
    <recommendedName>
        <fullName evidence="1">Small ribosomal subunit protein bS16</fullName>
    </recommendedName>
    <alternativeName>
        <fullName evidence="2">30S ribosomal protein S16</fullName>
    </alternativeName>
</protein>
<keyword id="KW-1185">Reference proteome</keyword>
<keyword id="KW-0687">Ribonucleoprotein</keyword>
<keyword id="KW-0689">Ribosomal protein</keyword>
<comment type="similarity">
    <text evidence="1">Belongs to the bacterial ribosomal protein bS16 family.</text>
</comment>
<accession>Q8ER01</accession>
<gene>
    <name evidence="1" type="primary">rpsP</name>
    <name type="ordered locus">OB1532</name>
</gene>
<organism>
    <name type="scientific">Oceanobacillus iheyensis (strain DSM 14371 / CIP 107618 / JCM 11309 / KCTC 3954 / HTE831)</name>
    <dbReference type="NCBI Taxonomy" id="221109"/>
    <lineage>
        <taxon>Bacteria</taxon>
        <taxon>Bacillati</taxon>
        <taxon>Bacillota</taxon>
        <taxon>Bacilli</taxon>
        <taxon>Bacillales</taxon>
        <taxon>Bacillaceae</taxon>
        <taxon>Oceanobacillus</taxon>
    </lineage>
</organism>
<dbReference type="EMBL" id="BA000028">
    <property type="protein sequence ID" value="BAC13488.1"/>
    <property type="molecule type" value="Genomic_DNA"/>
</dbReference>
<dbReference type="RefSeq" id="WP_011065932.1">
    <property type="nucleotide sequence ID" value="NC_004193.1"/>
</dbReference>
<dbReference type="SMR" id="Q8ER01"/>
<dbReference type="STRING" id="221109.gene:10733772"/>
<dbReference type="KEGG" id="oih:OB1532"/>
<dbReference type="eggNOG" id="COG0228">
    <property type="taxonomic scope" value="Bacteria"/>
</dbReference>
<dbReference type="HOGENOM" id="CLU_100590_5_0_9"/>
<dbReference type="OrthoDB" id="9807878at2"/>
<dbReference type="PhylomeDB" id="Q8ER01"/>
<dbReference type="Proteomes" id="UP000000822">
    <property type="component" value="Chromosome"/>
</dbReference>
<dbReference type="GO" id="GO:0005737">
    <property type="term" value="C:cytoplasm"/>
    <property type="evidence" value="ECO:0007669"/>
    <property type="project" value="UniProtKB-ARBA"/>
</dbReference>
<dbReference type="GO" id="GO:0015935">
    <property type="term" value="C:small ribosomal subunit"/>
    <property type="evidence" value="ECO:0007669"/>
    <property type="project" value="TreeGrafter"/>
</dbReference>
<dbReference type="GO" id="GO:0003735">
    <property type="term" value="F:structural constituent of ribosome"/>
    <property type="evidence" value="ECO:0007669"/>
    <property type="project" value="InterPro"/>
</dbReference>
<dbReference type="GO" id="GO:0006412">
    <property type="term" value="P:translation"/>
    <property type="evidence" value="ECO:0007669"/>
    <property type="project" value="UniProtKB-UniRule"/>
</dbReference>
<dbReference type="FunFam" id="3.30.1320.10:FF:000002">
    <property type="entry name" value="30S ribosomal protein S16"/>
    <property type="match status" value="1"/>
</dbReference>
<dbReference type="Gene3D" id="3.30.1320.10">
    <property type="match status" value="1"/>
</dbReference>
<dbReference type="HAMAP" id="MF_00385">
    <property type="entry name" value="Ribosomal_bS16"/>
    <property type="match status" value="1"/>
</dbReference>
<dbReference type="InterPro" id="IPR000307">
    <property type="entry name" value="Ribosomal_bS16"/>
</dbReference>
<dbReference type="InterPro" id="IPR023803">
    <property type="entry name" value="Ribosomal_bS16_dom_sf"/>
</dbReference>
<dbReference type="NCBIfam" id="TIGR00002">
    <property type="entry name" value="S16"/>
    <property type="match status" value="1"/>
</dbReference>
<dbReference type="PANTHER" id="PTHR12919">
    <property type="entry name" value="30S RIBOSOMAL PROTEIN S16"/>
    <property type="match status" value="1"/>
</dbReference>
<dbReference type="PANTHER" id="PTHR12919:SF20">
    <property type="entry name" value="SMALL RIBOSOMAL SUBUNIT PROTEIN BS16M"/>
    <property type="match status" value="1"/>
</dbReference>
<dbReference type="Pfam" id="PF00886">
    <property type="entry name" value="Ribosomal_S16"/>
    <property type="match status" value="1"/>
</dbReference>
<dbReference type="SUPFAM" id="SSF54565">
    <property type="entry name" value="Ribosomal protein S16"/>
    <property type="match status" value="1"/>
</dbReference>
<reference key="1">
    <citation type="journal article" date="2002" name="Nucleic Acids Res.">
        <title>Genome sequence of Oceanobacillus iheyensis isolated from the Iheya Ridge and its unexpected adaptive capabilities to extreme environments.</title>
        <authorList>
            <person name="Takami H."/>
            <person name="Takaki Y."/>
            <person name="Uchiyama I."/>
        </authorList>
    </citation>
    <scope>NUCLEOTIDE SEQUENCE [LARGE SCALE GENOMIC DNA]</scope>
    <source>
        <strain>DSM 14371 / CIP 107618 / JCM 11309 / KCTC 3954 / HTE831</strain>
    </source>
</reference>
<feature type="chain" id="PRO_0000167218" description="Small ribosomal subunit protein bS16">
    <location>
        <begin position="1"/>
        <end position="90"/>
    </location>
</feature>